<dbReference type="EMBL" id="FM242711">
    <property type="protein sequence ID" value="CAS04036.1"/>
    <property type="molecule type" value="Genomic_DNA"/>
</dbReference>
<dbReference type="RefSeq" id="WP_003726838.1">
    <property type="nucleotide sequence ID" value="NC_012488.1"/>
</dbReference>
<dbReference type="SMR" id="C1KYI1"/>
<dbReference type="GeneID" id="93233731"/>
<dbReference type="KEGG" id="lmc:Lm4b_00269"/>
<dbReference type="HOGENOM" id="CLU_062853_0_0_9"/>
<dbReference type="GO" id="GO:0015934">
    <property type="term" value="C:large ribosomal subunit"/>
    <property type="evidence" value="ECO:0007669"/>
    <property type="project" value="InterPro"/>
</dbReference>
<dbReference type="GO" id="GO:0019843">
    <property type="term" value="F:rRNA binding"/>
    <property type="evidence" value="ECO:0007669"/>
    <property type="project" value="UniProtKB-UniRule"/>
</dbReference>
<dbReference type="GO" id="GO:0003735">
    <property type="term" value="F:structural constituent of ribosome"/>
    <property type="evidence" value="ECO:0007669"/>
    <property type="project" value="InterPro"/>
</dbReference>
<dbReference type="GO" id="GO:0000049">
    <property type="term" value="F:tRNA binding"/>
    <property type="evidence" value="ECO:0007669"/>
    <property type="project" value="UniProtKB-KW"/>
</dbReference>
<dbReference type="GO" id="GO:0006417">
    <property type="term" value="P:regulation of translation"/>
    <property type="evidence" value="ECO:0007669"/>
    <property type="project" value="UniProtKB-KW"/>
</dbReference>
<dbReference type="GO" id="GO:0006412">
    <property type="term" value="P:translation"/>
    <property type="evidence" value="ECO:0007669"/>
    <property type="project" value="UniProtKB-UniRule"/>
</dbReference>
<dbReference type="CDD" id="cd00403">
    <property type="entry name" value="Ribosomal_L1"/>
    <property type="match status" value="1"/>
</dbReference>
<dbReference type="FunFam" id="3.40.50.790:FF:000001">
    <property type="entry name" value="50S ribosomal protein L1"/>
    <property type="match status" value="1"/>
</dbReference>
<dbReference type="Gene3D" id="3.30.190.20">
    <property type="match status" value="1"/>
</dbReference>
<dbReference type="Gene3D" id="3.40.50.790">
    <property type="match status" value="1"/>
</dbReference>
<dbReference type="HAMAP" id="MF_01318_B">
    <property type="entry name" value="Ribosomal_uL1_B"/>
    <property type="match status" value="1"/>
</dbReference>
<dbReference type="InterPro" id="IPR005878">
    <property type="entry name" value="Ribosom_uL1_bac-type"/>
</dbReference>
<dbReference type="InterPro" id="IPR002143">
    <property type="entry name" value="Ribosomal_uL1"/>
</dbReference>
<dbReference type="InterPro" id="IPR023674">
    <property type="entry name" value="Ribosomal_uL1-like"/>
</dbReference>
<dbReference type="InterPro" id="IPR028364">
    <property type="entry name" value="Ribosomal_uL1/biogenesis"/>
</dbReference>
<dbReference type="InterPro" id="IPR016095">
    <property type="entry name" value="Ribosomal_uL1_3-a/b-sand"/>
</dbReference>
<dbReference type="InterPro" id="IPR023673">
    <property type="entry name" value="Ribosomal_uL1_CS"/>
</dbReference>
<dbReference type="NCBIfam" id="TIGR01169">
    <property type="entry name" value="rplA_bact"/>
    <property type="match status" value="1"/>
</dbReference>
<dbReference type="PANTHER" id="PTHR36427">
    <property type="entry name" value="54S RIBOSOMAL PROTEIN L1, MITOCHONDRIAL"/>
    <property type="match status" value="1"/>
</dbReference>
<dbReference type="PANTHER" id="PTHR36427:SF3">
    <property type="entry name" value="LARGE RIBOSOMAL SUBUNIT PROTEIN UL1M"/>
    <property type="match status" value="1"/>
</dbReference>
<dbReference type="Pfam" id="PF00687">
    <property type="entry name" value="Ribosomal_L1"/>
    <property type="match status" value="1"/>
</dbReference>
<dbReference type="PIRSF" id="PIRSF002155">
    <property type="entry name" value="Ribosomal_L1"/>
    <property type="match status" value="1"/>
</dbReference>
<dbReference type="SUPFAM" id="SSF56808">
    <property type="entry name" value="Ribosomal protein L1"/>
    <property type="match status" value="1"/>
</dbReference>
<dbReference type="PROSITE" id="PS01199">
    <property type="entry name" value="RIBOSOMAL_L1"/>
    <property type="match status" value="1"/>
</dbReference>
<evidence type="ECO:0000255" key="1">
    <source>
        <dbReference type="HAMAP-Rule" id="MF_01318"/>
    </source>
</evidence>
<evidence type="ECO:0000305" key="2"/>
<proteinExistence type="inferred from homology"/>
<sequence>MAKKGKKYQDALKQIDANKVYTAEEAVELAKKIDFAKFDATVEVAFRLGVDPKKADQQIRGAVVLPNGTGKTQRVLVFAKGEKAKEAEAAGADYVGESEFVEKINQGWFEFDVIVATPDMMGEVGKLGRVLGPKGLMPNPKTGTVTMDVTKAVNEIKAGKVEYRVDKAGNVHAAIGKVSFDAAKLVENFRTVNDVLQKAKPAAAKGTYVKNLSVTTTFGPGIKVDPASL</sequence>
<comment type="function">
    <text evidence="1">Binds directly to 23S rRNA. The L1 stalk is quite mobile in the ribosome, and is involved in E site tRNA release.</text>
</comment>
<comment type="function">
    <text evidence="1">Protein L1 is also a translational repressor protein, it controls the translation of the L11 operon by binding to its mRNA.</text>
</comment>
<comment type="subunit">
    <text evidence="1">Part of the 50S ribosomal subunit.</text>
</comment>
<comment type="similarity">
    <text evidence="1">Belongs to the universal ribosomal protein uL1 family.</text>
</comment>
<name>RL1_LISMC</name>
<feature type="chain" id="PRO_1000214425" description="Large ribosomal subunit protein uL1">
    <location>
        <begin position="1"/>
        <end position="229"/>
    </location>
</feature>
<protein>
    <recommendedName>
        <fullName evidence="1">Large ribosomal subunit protein uL1</fullName>
    </recommendedName>
    <alternativeName>
        <fullName evidence="2">50S ribosomal protein L1</fullName>
    </alternativeName>
</protein>
<reference key="1">
    <citation type="journal article" date="2012" name="BMC Genomics">
        <title>Comparative genomics and transcriptomics of lineages I, II, and III strains of Listeria monocytogenes.</title>
        <authorList>
            <person name="Hain T."/>
            <person name="Ghai R."/>
            <person name="Billion A."/>
            <person name="Kuenne C.T."/>
            <person name="Steinweg C."/>
            <person name="Izar B."/>
            <person name="Mohamed W."/>
            <person name="Mraheil M."/>
            <person name="Domann E."/>
            <person name="Schaffrath S."/>
            <person name="Karst U."/>
            <person name="Goesmann A."/>
            <person name="Oehm S."/>
            <person name="Puhler A."/>
            <person name="Merkl R."/>
            <person name="Vorwerk S."/>
            <person name="Glaser P."/>
            <person name="Garrido P."/>
            <person name="Rusniok C."/>
            <person name="Buchrieser C."/>
            <person name="Goebel W."/>
            <person name="Chakraborty T."/>
        </authorList>
    </citation>
    <scope>NUCLEOTIDE SEQUENCE [LARGE SCALE GENOMIC DNA]</scope>
    <source>
        <strain>CLIP80459</strain>
    </source>
</reference>
<gene>
    <name evidence="1" type="primary">rplA</name>
    <name type="ordered locus">Lm4b_00269</name>
</gene>
<accession>C1KYI1</accession>
<organism>
    <name type="scientific">Listeria monocytogenes serotype 4b (strain CLIP80459)</name>
    <dbReference type="NCBI Taxonomy" id="568819"/>
    <lineage>
        <taxon>Bacteria</taxon>
        <taxon>Bacillati</taxon>
        <taxon>Bacillota</taxon>
        <taxon>Bacilli</taxon>
        <taxon>Bacillales</taxon>
        <taxon>Listeriaceae</taxon>
        <taxon>Listeria</taxon>
    </lineage>
</organism>
<keyword id="KW-0678">Repressor</keyword>
<keyword id="KW-0687">Ribonucleoprotein</keyword>
<keyword id="KW-0689">Ribosomal protein</keyword>
<keyword id="KW-0694">RNA-binding</keyword>
<keyword id="KW-0699">rRNA-binding</keyword>
<keyword id="KW-0810">Translation regulation</keyword>
<keyword id="KW-0820">tRNA-binding</keyword>